<feature type="chain" id="PRO_1000007924" description="S-adenosylmethionine synthase">
    <location>
        <begin position="1"/>
        <end position="400"/>
    </location>
</feature>
<feature type="region of interest" description="Flexible loop" evidence="1">
    <location>
        <begin position="101"/>
        <end position="111"/>
    </location>
</feature>
<feature type="binding site" description="in other chain" evidence="1">
    <location>
        <position position="17"/>
    </location>
    <ligand>
        <name>ATP</name>
        <dbReference type="ChEBI" id="CHEBI:30616"/>
        <note>ligand shared between two neighboring subunits</note>
    </ligand>
</feature>
<feature type="binding site" evidence="1">
    <location>
        <position position="19"/>
    </location>
    <ligand>
        <name>Mg(2+)</name>
        <dbReference type="ChEBI" id="CHEBI:18420"/>
    </ligand>
</feature>
<feature type="binding site" evidence="1">
    <location>
        <position position="45"/>
    </location>
    <ligand>
        <name>K(+)</name>
        <dbReference type="ChEBI" id="CHEBI:29103"/>
    </ligand>
</feature>
<feature type="binding site" description="in other chain" evidence="1">
    <location>
        <position position="58"/>
    </location>
    <ligand>
        <name>L-methionine</name>
        <dbReference type="ChEBI" id="CHEBI:57844"/>
        <note>ligand shared between two neighboring subunits</note>
    </ligand>
</feature>
<feature type="binding site" description="in other chain" evidence="1">
    <location>
        <position position="101"/>
    </location>
    <ligand>
        <name>L-methionine</name>
        <dbReference type="ChEBI" id="CHEBI:57844"/>
        <note>ligand shared between two neighboring subunits</note>
    </ligand>
</feature>
<feature type="binding site" description="in other chain" evidence="1">
    <location>
        <begin position="177"/>
        <end position="179"/>
    </location>
    <ligand>
        <name>ATP</name>
        <dbReference type="ChEBI" id="CHEBI:30616"/>
        <note>ligand shared between two neighboring subunits</note>
    </ligand>
</feature>
<feature type="binding site" description="in other chain" evidence="1">
    <location>
        <begin position="244"/>
        <end position="245"/>
    </location>
    <ligand>
        <name>ATP</name>
        <dbReference type="ChEBI" id="CHEBI:30616"/>
        <note>ligand shared between two neighboring subunits</note>
    </ligand>
</feature>
<feature type="binding site" evidence="1">
    <location>
        <position position="253"/>
    </location>
    <ligand>
        <name>ATP</name>
        <dbReference type="ChEBI" id="CHEBI:30616"/>
        <note>ligand shared between two neighboring subunits</note>
    </ligand>
</feature>
<feature type="binding site" evidence="1">
    <location>
        <position position="253"/>
    </location>
    <ligand>
        <name>L-methionine</name>
        <dbReference type="ChEBI" id="CHEBI:57844"/>
        <note>ligand shared between two neighboring subunits</note>
    </ligand>
</feature>
<feature type="binding site" description="in other chain" evidence="1">
    <location>
        <begin position="259"/>
        <end position="260"/>
    </location>
    <ligand>
        <name>ATP</name>
        <dbReference type="ChEBI" id="CHEBI:30616"/>
        <note>ligand shared between two neighboring subunits</note>
    </ligand>
</feature>
<feature type="binding site" evidence="1">
    <location>
        <position position="276"/>
    </location>
    <ligand>
        <name>ATP</name>
        <dbReference type="ChEBI" id="CHEBI:30616"/>
        <note>ligand shared between two neighboring subunits</note>
    </ligand>
</feature>
<feature type="binding site" evidence="1">
    <location>
        <position position="280"/>
    </location>
    <ligand>
        <name>ATP</name>
        <dbReference type="ChEBI" id="CHEBI:30616"/>
        <note>ligand shared between two neighboring subunits</note>
    </ligand>
</feature>
<feature type="binding site" description="in other chain" evidence="1">
    <location>
        <position position="284"/>
    </location>
    <ligand>
        <name>L-methionine</name>
        <dbReference type="ChEBI" id="CHEBI:57844"/>
        <note>ligand shared between two neighboring subunits</note>
    </ligand>
</feature>
<protein>
    <recommendedName>
        <fullName evidence="1">S-adenosylmethionine synthase</fullName>
        <shortName evidence="1">AdoMet synthase</shortName>
        <ecNumber evidence="1">2.5.1.6</ecNumber>
    </recommendedName>
    <alternativeName>
        <fullName evidence="1">MAT</fullName>
    </alternativeName>
    <alternativeName>
        <fullName evidence="1">Methionine adenosyltransferase</fullName>
    </alternativeName>
</protein>
<sequence>MSKNRRLFTSESVTEGHPDKICDQISDSILDEILKNDPNARVACETSVTTGLVLVSGEITTSTYVDIPKTVRETIKEIGYTRAKYGFDAETCAVLTSIDEQSADIAMGVDQALEAREGTMSDAEIEAIGAGDQGLMFGYACNETKELMPLPISLAHKLARRLSEVRKEDILPYLRPDGKTQVTVEYDENNKPVRIDAIVISTQHHPEITLEQIQRNLKEHVINPVVPEELIDEETKYFINPTGRFVIGGPQGDAGLTGRKIIVDTYGGYARHGGGAFSGKDATKVDRSAAYAARYVAKNIVAAGLADSCEVQLAYAIGVAQPVSISINTFDTGKASEEKLIEVVRNNFDLRPAGIIKMLDLRRPIYKQTAAYGHFGRHDVDLPWERTDKADALRKEALGE</sequence>
<gene>
    <name evidence="1" type="primary">metK</name>
    <name type="ordered locus">RBAM_027570</name>
</gene>
<keyword id="KW-0067">ATP-binding</keyword>
<keyword id="KW-0963">Cytoplasm</keyword>
<keyword id="KW-0460">Magnesium</keyword>
<keyword id="KW-0479">Metal-binding</keyword>
<keyword id="KW-0547">Nucleotide-binding</keyword>
<keyword id="KW-0554">One-carbon metabolism</keyword>
<keyword id="KW-0630">Potassium</keyword>
<keyword id="KW-0808">Transferase</keyword>
<organism>
    <name type="scientific">Bacillus velezensis (strain DSM 23117 / BGSC 10A6 / LMG 26770 / FZB42)</name>
    <name type="common">Bacillus amyloliquefaciens subsp. plantarum</name>
    <dbReference type="NCBI Taxonomy" id="326423"/>
    <lineage>
        <taxon>Bacteria</taxon>
        <taxon>Bacillati</taxon>
        <taxon>Bacillota</taxon>
        <taxon>Bacilli</taxon>
        <taxon>Bacillales</taxon>
        <taxon>Bacillaceae</taxon>
        <taxon>Bacillus</taxon>
        <taxon>Bacillus amyloliquefaciens group</taxon>
    </lineage>
</organism>
<evidence type="ECO:0000255" key="1">
    <source>
        <dbReference type="HAMAP-Rule" id="MF_00086"/>
    </source>
</evidence>
<proteinExistence type="inferred from homology"/>
<comment type="function">
    <text evidence="1">Catalyzes the formation of S-adenosylmethionine (AdoMet) from methionine and ATP. The overall synthetic reaction is composed of two sequential steps, AdoMet formation and the subsequent tripolyphosphate hydrolysis which occurs prior to release of AdoMet from the enzyme.</text>
</comment>
<comment type="catalytic activity">
    <reaction evidence="1">
        <text>L-methionine + ATP + H2O = S-adenosyl-L-methionine + phosphate + diphosphate</text>
        <dbReference type="Rhea" id="RHEA:21080"/>
        <dbReference type="ChEBI" id="CHEBI:15377"/>
        <dbReference type="ChEBI" id="CHEBI:30616"/>
        <dbReference type="ChEBI" id="CHEBI:33019"/>
        <dbReference type="ChEBI" id="CHEBI:43474"/>
        <dbReference type="ChEBI" id="CHEBI:57844"/>
        <dbReference type="ChEBI" id="CHEBI:59789"/>
        <dbReference type="EC" id="2.5.1.6"/>
    </reaction>
</comment>
<comment type="cofactor">
    <cofactor evidence="1">
        <name>Mg(2+)</name>
        <dbReference type="ChEBI" id="CHEBI:18420"/>
    </cofactor>
    <text evidence="1">Binds 2 divalent ions per subunit.</text>
</comment>
<comment type="cofactor">
    <cofactor evidence="1">
        <name>K(+)</name>
        <dbReference type="ChEBI" id="CHEBI:29103"/>
    </cofactor>
    <text evidence="1">Binds 1 potassium ion per subunit.</text>
</comment>
<comment type="pathway">
    <text evidence="1">Amino-acid biosynthesis; S-adenosyl-L-methionine biosynthesis; S-adenosyl-L-methionine from L-methionine: step 1/1.</text>
</comment>
<comment type="subunit">
    <text evidence="1">Homotetramer; dimer of dimers.</text>
</comment>
<comment type="subcellular location">
    <subcellularLocation>
        <location evidence="1">Cytoplasm</location>
    </subcellularLocation>
</comment>
<comment type="similarity">
    <text evidence="1">Belongs to the AdoMet synthase family.</text>
</comment>
<name>METK_BACVZ</name>
<accession>A7Z7Y9</accession>
<dbReference type="EC" id="2.5.1.6" evidence="1"/>
<dbReference type="EMBL" id="CP000560">
    <property type="protein sequence ID" value="ABS75115.1"/>
    <property type="molecule type" value="Genomic_DNA"/>
</dbReference>
<dbReference type="RefSeq" id="WP_003152253.1">
    <property type="nucleotide sequence ID" value="NC_009725.2"/>
</dbReference>
<dbReference type="SMR" id="A7Z7Y9"/>
<dbReference type="GeneID" id="93081898"/>
<dbReference type="KEGG" id="bay:RBAM_027570"/>
<dbReference type="HOGENOM" id="CLU_041802_1_1_9"/>
<dbReference type="UniPathway" id="UPA00315">
    <property type="reaction ID" value="UER00080"/>
</dbReference>
<dbReference type="Proteomes" id="UP000001120">
    <property type="component" value="Chromosome"/>
</dbReference>
<dbReference type="GO" id="GO:0005737">
    <property type="term" value="C:cytoplasm"/>
    <property type="evidence" value="ECO:0007669"/>
    <property type="project" value="UniProtKB-SubCell"/>
</dbReference>
<dbReference type="GO" id="GO:0005524">
    <property type="term" value="F:ATP binding"/>
    <property type="evidence" value="ECO:0007669"/>
    <property type="project" value="UniProtKB-UniRule"/>
</dbReference>
<dbReference type="GO" id="GO:0000287">
    <property type="term" value="F:magnesium ion binding"/>
    <property type="evidence" value="ECO:0007669"/>
    <property type="project" value="UniProtKB-UniRule"/>
</dbReference>
<dbReference type="GO" id="GO:0004478">
    <property type="term" value="F:methionine adenosyltransferase activity"/>
    <property type="evidence" value="ECO:0007669"/>
    <property type="project" value="UniProtKB-UniRule"/>
</dbReference>
<dbReference type="GO" id="GO:0006730">
    <property type="term" value="P:one-carbon metabolic process"/>
    <property type="evidence" value="ECO:0007669"/>
    <property type="project" value="UniProtKB-KW"/>
</dbReference>
<dbReference type="GO" id="GO:0006556">
    <property type="term" value="P:S-adenosylmethionine biosynthetic process"/>
    <property type="evidence" value="ECO:0007669"/>
    <property type="project" value="UniProtKB-UniRule"/>
</dbReference>
<dbReference type="CDD" id="cd18079">
    <property type="entry name" value="S-AdoMet_synt"/>
    <property type="match status" value="1"/>
</dbReference>
<dbReference type="FunFam" id="3.30.300.10:FF:000003">
    <property type="entry name" value="S-adenosylmethionine synthase"/>
    <property type="match status" value="1"/>
</dbReference>
<dbReference type="FunFam" id="3.30.300.10:FF:000004">
    <property type="entry name" value="S-adenosylmethionine synthase"/>
    <property type="match status" value="1"/>
</dbReference>
<dbReference type="Gene3D" id="3.30.300.10">
    <property type="match status" value="3"/>
</dbReference>
<dbReference type="HAMAP" id="MF_00086">
    <property type="entry name" value="S_AdoMet_synth1"/>
    <property type="match status" value="1"/>
</dbReference>
<dbReference type="InterPro" id="IPR022631">
    <property type="entry name" value="ADOMET_SYNTHASE_CS"/>
</dbReference>
<dbReference type="InterPro" id="IPR022630">
    <property type="entry name" value="S-AdoMet_synt_C"/>
</dbReference>
<dbReference type="InterPro" id="IPR022629">
    <property type="entry name" value="S-AdoMet_synt_central"/>
</dbReference>
<dbReference type="InterPro" id="IPR022628">
    <property type="entry name" value="S-AdoMet_synt_N"/>
</dbReference>
<dbReference type="InterPro" id="IPR002133">
    <property type="entry name" value="S-AdoMet_synthetase"/>
</dbReference>
<dbReference type="InterPro" id="IPR022636">
    <property type="entry name" value="S-AdoMet_synthetase_sfam"/>
</dbReference>
<dbReference type="NCBIfam" id="TIGR01034">
    <property type="entry name" value="metK"/>
    <property type="match status" value="1"/>
</dbReference>
<dbReference type="PANTHER" id="PTHR11964">
    <property type="entry name" value="S-ADENOSYLMETHIONINE SYNTHETASE"/>
    <property type="match status" value="1"/>
</dbReference>
<dbReference type="Pfam" id="PF02773">
    <property type="entry name" value="S-AdoMet_synt_C"/>
    <property type="match status" value="1"/>
</dbReference>
<dbReference type="Pfam" id="PF02772">
    <property type="entry name" value="S-AdoMet_synt_M"/>
    <property type="match status" value="1"/>
</dbReference>
<dbReference type="Pfam" id="PF00438">
    <property type="entry name" value="S-AdoMet_synt_N"/>
    <property type="match status" value="1"/>
</dbReference>
<dbReference type="PIRSF" id="PIRSF000497">
    <property type="entry name" value="MAT"/>
    <property type="match status" value="1"/>
</dbReference>
<dbReference type="SUPFAM" id="SSF55973">
    <property type="entry name" value="S-adenosylmethionine synthetase"/>
    <property type="match status" value="3"/>
</dbReference>
<dbReference type="PROSITE" id="PS00376">
    <property type="entry name" value="ADOMET_SYNTHASE_1"/>
    <property type="match status" value="1"/>
</dbReference>
<dbReference type="PROSITE" id="PS00377">
    <property type="entry name" value="ADOMET_SYNTHASE_2"/>
    <property type="match status" value="1"/>
</dbReference>
<reference key="1">
    <citation type="journal article" date="2007" name="Nat. Biotechnol.">
        <title>Comparative analysis of the complete genome sequence of the plant growth-promoting bacterium Bacillus amyloliquefaciens FZB42.</title>
        <authorList>
            <person name="Chen X.H."/>
            <person name="Koumoutsi A."/>
            <person name="Scholz R."/>
            <person name="Eisenreich A."/>
            <person name="Schneider K."/>
            <person name="Heinemeyer I."/>
            <person name="Morgenstern B."/>
            <person name="Voss B."/>
            <person name="Hess W.R."/>
            <person name="Reva O."/>
            <person name="Junge H."/>
            <person name="Voigt B."/>
            <person name="Jungblut P.R."/>
            <person name="Vater J."/>
            <person name="Suessmuth R."/>
            <person name="Liesegang H."/>
            <person name="Strittmatter A."/>
            <person name="Gottschalk G."/>
            <person name="Borriss R."/>
        </authorList>
    </citation>
    <scope>NUCLEOTIDE SEQUENCE [LARGE SCALE GENOMIC DNA]</scope>
    <source>
        <strain>DSM 23117 / BGSC 10A6 / LMG 26770 / FZB42</strain>
    </source>
</reference>